<accession>Q0BH92</accession>
<reference key="1">
    <citation type="submission" date="2006-08" db="EMBL/GenBank/DDBJ databases">
        <title>Complete sequence of chromosome 1 of Burkholderia cepacia AMMD.</title>
        <authorList>
            <person name="Copeland A."/>
            <person name="Lucas S."/>
            <person name="Lapidus A."/>
            <person name="Barry K."/>
            <person name="Detter J.C."/>
            <person name="Glavina del Rio T."/>
            <person name="Hammon N."/>
            <person name="Israni S."/>
            <person name="Pitluck S."/>
            <person name="Bruce D."/>
            <person name="Chain P."/>
            <person name="Malfatti S."/>
            <person name="Shin M."/>
            <person name="Vergez L."/>
            <person name="Schmutz J."/>
            <person name="Larimer F."/>
            <person name="Land M."/>
            <person name="Hauser L."/>
            <person name="Kyrpides N."/>
            <person name="Kim E."/>
            <person name="Parke J."/>
            <person name="Coenye T."/>
            <person name="Konstantinidis K."/>
            <person name="Ramette A."/>
            <person name="Tiedje J."/>
            <person name="Richardson P."/>
        </authorList>
    </citation>
    <scope>NUCLEOTIDE SEQUENCE [LARGE SCALE GENOMIC DNA]</scope>
    <source>
        <strain>ATCC BAA-244 / DSM 16087 / CCUG 44356 / LMG 19182 / AMMD</strain>
    </source>
</reference>
<comment type="catalytic activity">
    <reaction evidence="1">
        <text>CMP + ATP = CDP + ADP</text>
        <dbReference type="Rhea" id="RHEA:11600"/>
        <dbReference type="ChEBI" id="CHEBI:30616"/>
        <dbReference type="ChEBI" id="CHEBI:58069"/>
        <dbReference type="ChEBI" id="CHEBI:60377"/>
        <dbReference type="ChEBI" id="CHEBI:456216"/>
        <dbReference type="EC" id="2.7.4.25"/>
    </reaction>
</comment>
<comment type="catalytic activity">
    <reaction evidence="1">
        <text>dCMP + ATP = dCDP + ADP</text>
        <dbReference type="Rhea" id="RHEA:25094"/>
        <dbReference type="ChEBI" id="CHEBI:30616"/>
        <dbReference type="ChEBI" id="CHEBI:57566"/>
        <dbReference type="ChEBI" id="CHEBI:58593"/>
        <dbReference type="ChEBI" id="CHEBI:456216"/>
        <dbReference type="EC" id="2.7.4.25"/>
    </reaction>
</comment>
<comment type="subcellular location">
    <subcellularLocation>
        <location evidence="1">Cytoplasm</location>
    </subcellularLocation>
</comment>
<comment type="similarity">
    <text evidence="1">Belongs to the cytidylate kinase family. Type 1 subfamily.</text>
</comment>
<keyword id="KW-0067">ATP-binding</keyword>
<keyword id="KW-0963">Cytoplasm</keyword>
<keyword id="KW-0418">Kinase</keyword>
<keyword id="KW-0547">Nucleotide-binding</keyword>
<keyword id="KW-0808">Transferase</keyword>
<sequence>MKSTRPFHPTPVITIDGPTASGKGTVAALVAAHLGFHLLDSGALYRLAALASVRYGIAAEDIDALVKLIDDLHITFREGCAQLDGVDVSNDIRAEAVGNRASAIAVHGPVRSALVARQRAFRKTPGLVADGRDMGTVIFPDAVLKVFLTASAEARAARRHKQLMQKGFSANIDDLLRDLRERDARDSNRAAAPLKPAADAELLDTSALSVDEAVDQVLQWYRALGQPA</sequence>
<evidence type="ECO:0000255" key="1">
    <source>
        <dbReference type="HAMAP-Rule" id="MF_00238"/>
    </source>
</evidence>
<protein>
    <recommendedName>
        <fullName evidence="1">Cytidylate kinase</fullName>
        <shortName evidence="1">CK</shortName>
        <ecNumber evidence="1">2.7.4.25</ecNumber>
    </recommendedName>
    <alternativeName>
        <fullName evidence="1">Cytidine monophosphate kinase</fullName>
        <shortName evidence="1">CMP kinase</shortName>
    </alternativeName>
</protein>
<gene>
    <name evidence="1" type="primary">cmk</name>
    <name type="ordered locus">Bamb_0922</name>
</gene>
<feature type="chain" id="PRO_1000048195" description="Cytidylate kinase">
    <location>
        <begin position="1"/>
        <end position="228"/>
    </location>
</feature>
<feature type="binding site" evidence="1">
    <location>
        <begin position="17"/>
        <end position="25"/>
    </location>
    <ligand>
        <name>ATP</name>
        <dbReference type="ChEBI" id="CHEBI:30616"/>
    </ligand>
</feature>
<name>KCY_BURCM</name>
<dbReference type="EC" id="2.7.4.25" evidence="1"/>
<dbReference type="EMBL" id="CP000440">
    <property type="protein sequence ID" value="ABI86481.1"/>
    <property type="molecule type" value="Genomic_DNA"/>
</dbReference>
<dbReference type="RefSeq" id="WP_006750754.1">
    <property type="nucleotide sequence ID" value="NZ_CP009798.1"/>
</dbReference>
<dbReference type="SMR" id="Q0BH92"/>
<dbReference type="GeneID" id="93083669"/>
<dbReference type="KEGG" id="bam:Bamb_0922"/>
<dbReference type="PATRIC" id="fig|339670.21.peg.653"/>
<dbReference type="eggNOG" id="COG0283">
    <property type="taxonomic scope" value="Bacteria"/>
</dbReference>
<dbReference type="Proteomes" id="UP000000662">
    <property type="component" value="Chromosome 1"/>
</dbReference>
<dbReference type="GO" id="GO:0005829">
    <property type="term" value="C:cytosol"/>
    <property type="evidence" value="ECO:0007669"/>
    <property type="project" value="TreeGrafter"/>
</dbReference>
<dbReference type="GO" id="GO:0005524">
    <property type="term" value="F:ATP binding"/>
    <property type="evidence" value="ECO:0007669"/>
    <property type="project" value="UniProtKB-UniRule"/>
</dbReference>
<dbReference type="GO" id="GO:0036430">
    <property type="term" value="F:CMP kinase activity"/>
    <property type="evidence" value="ECO:0007669"/>
    <property type="project" value="RHEA"/>
</dbReference>
<dbReference type="GO" id="GO:0036431">
    <property type="term" value="F:dCMP kinase activity"/>
    <property type="evidence" value="ECO:0007669"/>
    <property type="project" value="RHEA"/>
</dbReference>
<dbReference type="GO" id="GO:0015949">
    <property type="term" value="P:nucleobase-containing small molecule interconversion"/>
    <property type="evidence" value="ECO:0007669"/>
    <property type="project" value="TreeGrafter"/>
</dbReference>
<dbReference type="GO" id="GO:0006220">
    <property type="term" value="P:pyrimidine nucleotide metabolic process"/>
    <property type="evidence" value="ECO:0007669"/>
    <property type="project" value="UniProtKB-UniRule"/>
</dbReference>
<dbReference type="CDD" id="cd02020">
    <property type="entry name" value="CMPK"/>
    <property type="match status" value="1"/>
</dbReference>
<dbReference type="Gene3D" id="3.40.50.300">
    <property type="entry name" value="P-loop containing nucleotide triphosphate hydrolases"/>
    <property type="match status" value="1"/>
</dbReference>
<dbReference type="HAMAP" id="MF_00238">
    <property type="entry name" value="Cytidyl_kinase_type1"/>
    <property type="match status" value="1"/>
</dbReference>
<dbReference type="InterPro" id="IPR003136">
    <property type="entry name" value="Cytidylate_kin"/>
</dbReference>
<dbReference type="InterPro" id="IPR011994">
    <property type="entry name" value="Cytidylate_kinase_dom"/>
</dbReference>
<dbReference type="InterPro" id="IPR027417">
    <property type="entry name" value="P-loop_NTPase"/>
</dbReference>
<dbReference type="NCBIfam" id="TIGR00017">
    <property type="entry name" value="cmk"/>
    <property type="match status" value="1"/>
</dbReference>
<dbReference type="PANTHER" id="PTHR21299:SF2">
    <property type="entry name" value="CYTIDYLATE KINASE"/>
    <property type="match status" value="1"/>
</dbReference>
<dbReference type="PANTHER" id="PTHR21299">
    <property type="entry name" value="CYTIDYLATE KINASE/PANTOATE-BETA-ALANINE LIGASE"/>
    <property type="match status" value="1"/>
</dbReference>
<dbReference type="Pfam" id="PF02224">
    <property type="entry name" value="Cytidylate_kin"/>
    <property type="match status" value="1"/>
</dbReference>
<dbReference type="SUPFAM" id="SSF52540">
    <property type="entry name" value="P-loop containing nucleoside triphosphate hydrolases"/>
    <property type="match status" value="1"/>
</dbReference>
<proteinExistence type="inferred from homology"/>
<organism>
    <name type="scientific">Burkholderia ambifaria (strain ATCC BAA-244 / DSM 16087 / CCUG 44356 / LMG 19182 / AMMD)</name>
    <name type="common">Burkholderia cepacia (strain AMMD)</name>
    <dbReference type="NCBI Taxonomy" id="339670"/>
    <lineage>
        <taxon>Bacteria</taxon>
        <taxon>Pseudomonadati</taxon>
        <taxon>Pseudomonadota</taxon>
        <taxon>Betaproteobacteria</taxon>
        <taxon>Burkholderiales</taxon>
        <taxon>Burkholderiaceae</taxon>
        <taxon>Burkholderia</taxon>
        <taxon>Burkholderia cepacia complex</taxon>
    </lineage>
</organism>